<dbReference type="EMBL" id="AB035508">
    <property type="protein sequence ID" value="BAB16050.1"/>
    <property type="molecule type" value="mRNA"/>
</dbReference>
<dbReference type="EMBL" id="AB035509">
    <property type="protein sequence ID" value="BAB16051.1"/>
    <property type="molecule type" value="mRNA"/>
</dbReference>
<dbReference type="EMBL" id="BC026985">
    <property type="protein sequence ID" value="AAH26985.1"/>
    <property type="molecule type" value="mRNA"/>
</dbReference>
<dbReference type="EMBL" id="AJ297450">
    <property type="protein sequence ID" value="CAB97362.1"/>
    <property type="molecule type" value="mRNA"/>
</dbReference>
<dbReference type="EMBL" id="AJ297451">
    <property type="protein sequence ID" value="CAB97363.1"/>
    <property type="molecule type" value="mRNA"/>
</dbReference>
<dbReference type="CCDS" id="CCDS23097.1">
    <molecule id="Q8R2Y2-1"/>
</dbReference>
<dbReference type="CCDS" id="CCDS90545.1">
    <molecule id="Q8R2Y2-2"/>
</dbReference>
<dbReference type="RefSeq" id="NP_001346459.1">
    <molecule id="Q8R2Y2-2"/>
    <property type="nucleotide sequence ID" value="NM_001359530.2"/>
</dbReference>
<dbReference type="RefSeq" id="NP_075548.2">
    <molecule id="Q8R2Y2-1"/>
    <property type="nucleotide sequence ID" value="NM_023061.3"/>
</dbReference>
<dbReference type="RefSeq" id="XP_006510779.1">
    <property type="nucleotide sequence ID" value="XM_006510716.2"/>
</dbReference>
<dbReference type="SMR" id="Q8R2Y2"/>
<dbReference type="BioGRID" id="219997">
    <property type="interactions" value="1"/>
</dbReference>
<dbReference type="FunCoup" id="Q8R2Y2">
    <property type="interactions" value="271"/>
</dbReference>
<dbReference type="STRING" id="10090.ENSMUSP00000034650"/>
<dbReference type="BindingDB" id="Q8R2Y2"/>
<dbReference type="GlyConnect" id="2202">
    <property type="glycosylation" value="1 N-Linked glycan (1 site)"/>
</dbReference>
<dbReference type="GlyCosmos" id="Q8R2Y2">
    <property type="glycosylation" value="2 sites, 1 glycan"/>
</dbReference>
<dbReference type="GlyGen" id="Q8R2Y2">
    <property type="glycosylation" value="5 sites, 3 N-linked glycans (2 sites), 1 O-linked glycan (1 site)"/>
</dbReference>
<dbReference type="iPTMnet" id="Q8R2Y2"/>
<dbReference type="PhosphoSitePlus" id="Q8R2Y2"/>
<dbReference type="SwissPalm" id="Q8R2Y2"/>
<dbReference type="jPOST" id="Q8R2Y2"/>
<dbReference type="PaxDb" id="10090-ENSMUSP00000034650"/>
<dbReference type="PeptideAtlas" id="Q8R2Y2"/>
<dbReference type="ProteomicsDB" id="287521">
    <molecule id="Q8R2Y2-1"/>
</dbReference>
<dbReference type="ProteomicsDB" id="287522">
    <molecule id="Q8R2Y2-2"/>
</dbReference>
<dbReference type="Antibodypedia" id="2244">
    <property type="antibodies" value="2156 antibodies from 49 providers"/>
</dbReference>
<dbReference type="DNASU" id="84004"/>
<dbReference type="Ensembl" id="ENSMUST00000034650.15">
    <molecule id="Q8R2Y2-1"/>
    <property type="protein sequence ID" value="ENSMUSP00000034650.9"/>
    <property type="gene ID" value="ENSMUSG00000032135.16"/>
</dbReference>
<dbReference type="Ensembl" id="ENSMUST00000098852.3">
    <molecule id="Q8R2Y2-2"/>
    <property type="protein sequence ID" value="ENSMUSP00000096451.3"/>
    <property type="gene ID" value="ENSMUSG00000032135.16"/>
</dbReference>
<dbReference type="GeneID" id="84004"/>
<dbReference type="KEGG" id="mmu:84004"/>
<dbReference type="UCSC" id="uc009pbw.2">
    <molecule id="Q8R2Y2-1"/>
    <property type="organism name" value="mouse"/>
</dbReference>
<dbReference type="UCSC" id="uc009pbx.2">
    <molecule id="Q8R2Y2-2"/>
    <property type="organism name" value="mouse"/>
</dbReference>
<dbReference type="AGR" id="MGI:1933966"/>
<dbReference type="CTD" id="4162"/>
<dbReference type="MGI" id="MGI:1933966">
    <property type="gene designation" value="Mcam"/>
</dbReference>
<dbReference type="VEuPathDB" id="HostDB:ENSMUSG00000032135"/>
<dbReference type="eggNOG" id="ENOG502QV1U">
    <property type="taxonomic scope" value="Eukaryota"/>
</dbReference>
<dbReference type="GeneTree" id="ENSGT00940000155838"/>
<dbReference type="HOGENOM" id="CLU_028888_3_0_1"/>
<dbReference type="InParanoid" id="Q8R2Y2"/>
<dbReference type="OMA" id="ANEHMTH"/>
<dbReference type="OrthoDB" id="10010939at2759"/>
<dbReference type="PhylomeDB" id="Q8R2Y2"/>
<dbReference type="TreeFam" id="TF330534"/>
<dbReference type="Reactome" id="R-MMU-8980692">
    <property type="pathway name" value="RHOA GTPase cycle"/>
</dbReference>
<dbReference type="Reactome" id="R-MMU-9013026">
    <property type="pathway name" value="RHOB GTPase cycle"/>
</dbReference>
<dbReference type="Reactome" id="R-MMU-9013106">
    <property type="pathway name" value="RHOC GTPase cycle"/>
</dbReference>
<dbReference type="Reactome" id="R-MMU-9013149">
    <property type="pathway name" value="RAC1 GTPase cycle"/>
</dbReference>
<dbReference type="Reactome" id="R-MMU-9013404">
    <property type="pathway name" value="RAC2 GTPase cycle"/>
</dbReference>
<dbReference type="Reactome" id="R-MMU-9013405">
    <property type="pathway name" value="RHOD GTPase cycle"/>
</dbReference>
<dbReference type="Reactome" id="R-MMU-9013408">
    <property type="pathway name" value="RHOG GTPase cycle"/>
</dbReference>
<dbReference type="Reactome" id="R-MMU-9013423">
    <property type="pathway name" value="RAC3 GTPase cycle"/>
</dbReference>
<dbReference type="Reactome" id="R-MMU-9035034">
    <property type="pathway name" value="RHOF GTPase cycle"/>
</dbReference>
<dbReference type="BioGRID-ORCS" id="84004">
    <property type="hits" value="2 hits in 81 CRISPR screens"/>
</dbReference>
<dbReference type="ChiTaRS" id="Mcam">
    <property type="organism name" value="mouse"/>
</dbReference>
<dbReference type="PRO" id="PR:Q8R2Y2"/>
<dbReference type="Proteomes" id="UP000000589">
    <property type="component" value="Chromosome 9"/>
</dbReference>
<dbReference type="RNAct" id="Q8R2Y2">
    <property type="molecule type" value="protein"/>
</dbReference>
<dbReference type="Bgee" id="ENSMUSG00000032135">
    <property type="expression patterns" value="Expressed in aorta tunica media and 190 other cell types or tissues"/>
</dbReference>
<dbReference type="ExpressionAtlas" id="Q8R2Y2">
    <property type="expression patterns" value="baseline and differential"/>
</dbReference>
<dbReference type="GO" id="GO:0009897">
    <property type="term" value="C:external side of plasma membrane"/>
    <property type="evidence" value="ECO:0007669"/>
    <property type="project" value="Ensembl"/>
</dbReference>
<dbReference type="GO" id="GO:0005615">
    <property type="term" value="C:extracellular space"/>
    <property type="evidence" value="ECO:0007669"/>
    <property type="project" value="Ensembl"/>
</dbReference>
<dbReference type="GO" id="GO:0005886">
    <property type="term" value="C:plasma membrane"/>
    <property type="evidence" value="ECO:0000266"/>
    <property type="project" value="MGI"/>
</dbReference>
<dbReference type="GO" id="GO:0001525">
    <property type="term" value="P:angiogenesis"/>
    <property type="evidence" value="ECO:0000266"/>
    <property type="project" value="MGI"/>
</dbReference>
<dbReference type="GO" id="GO:0007155">
    <property type="term" value="P:cell adhesion"/>
    <property type="evidence" value="ECO:0000266"/>
    <property type="project" value="MGI"/>
</dbReference>
<dbReference type="GO" id="GO:0003094">
    <property type="term" value="P:glomerular filtration"/>
    <property type="evidence" value="ECO:0007669"/>
    <property type="project" value="Ensembl"/>
</dbReference>
<dbReference type="GO" id="GO:0007157">
    <property type="term" value="P:heterophilic cell-cell adhesion via plasma membrane cell adhesion molecules"/>
    <property type="evidence" value="ECO:0000266"/>
    <property type="project" value="MGI"/>
</dbReference>
<dbReference type="GO" id="GO:0030335">
    <property type="term" value="P:positive regulation of cell migration"/>
    <property type="evidence" value="ECO:0007669"/>
    <property type="project" value="Ensembl"/>
</dbReference>
<dbReference type="GO" id="GO:0061042">
    <property type="term" value="P:vascular wound healing"/>
    <property type="evidence" value="ECO:0007669"/>
    <property type="project" value="Ensembl"/>
</dbReference>
<dbReference type="FunFam" id="2.60.40.10:FF:001086">
    <property type="entry name" value="Cell surface glycoprotein MUC18"/>
    <property type="match status" value="1"/>
</dbReference>
<dbReference type="Gene3D" id="2.60.40.10">
    <property type="entry name" value="Immunoglobulins"/>
    <property type="match status" value="5"/>
</dbReference>
<dbReference type="InterPro" id="IPR013162">
    <property type="entry name" value="CD80_C2-set"/>
</dbReference>
<dbReference type="InterPro" id="IPR007110">
    <property type="entry name" value="Ig-like_dom"/>
</dbReference>
<dbReference type="InterPro" id="IPR036179">
    <property type="entry name" value="Ig-like_dom_sf"/>
</dbReference>
<dbReference type="InterPro" id="IPR013783">
    <property type="entry name" value="Ig-like_fold"/>
</dbReference>
<dbReference type="InterPro" id="IPR013098">
    <property type="entry name" value="Ig_I-set"/>
</dbReference>
<dbReference type="InterPro" id="IPR003599">
    <property type="entry name" value="Ig_sub"/>
</dbReference>
<dbReference type="InterPro" id="IPR003598">
    <property type="entry name" value="Ig_sub2"/>
</dbReference>
<dbReference type="InterPro" id="IPR013106">
    <property type="entry name" value="Ig_V-set"/>
</dbReference>
<dbReference type="InterPro" id="IPR051116">
    <property type="entry name" value="Surface_Rcpt/Adhesion_Mol"/>
</dbReference>
<dbReference type="PANTHER" id="PTHR11973:SF18">
    <property type="entry name" value="CELL SURFACE GLYCOPROTEIN MUC18"/>
    <property type="match status" value="1"/>
</dbReference>
<dbReference type="PANTHER" id="PTHR11973">
    <property type="entry name" value="CELL SURFACE GLYCOPROTEIN MUC18-RELATED"/>
    <property type="match status" value="1"/>
</dbReference>
<dbReference type="Pfam" id="PF08205">
    <property type="entry name" value="C2-set_2"/>
    <property type="match status" value="1"/>
</dbReference>
<dbReference type="Pfam" id="PF07679">
    <property type="entry name" value="I-set"/>
    <property type="match status" value="1"/>
</dbReference>
<dbReference type="Pfam" id="PF13927">
    <property type="entry name" value="Ig_3"/>
    <property type="match status" value="2"/>
</dbReference>
<dbReference type="Pfam" id="PF07686">
    <property type="entry name" value="V-set"/>
    <property type="match status" value="1"/>
</dbReference>
<dbReference type="SMART" id="SM00409">
    <property type="entry name" value="IG"/>
    <property type="match status" value="4"/>
</dbReference>
<dbReference type="SMART" id="SM00408">
    <property type="entry name" value="IGc2"/>
    <property type="match status" value="4"/>
</dbReference>
<dbReference type="SUPFAM" id="SSF48726">
    <property type="entry name" value="Immunoglobulin"/>
    <property type="match status" value="5"/>
</dbReference>
<dbReference type="PROSITE" id="PS50835">
    <property type="entry name" value="IG_LIKE"/>
    <property type="match status" value="4"/>
</dbReference>
<gene>
    <name type="primary">Mcam</name>
    <name type="synonym">Muc18</name>
</gene>
<sequence length="648" mass="71545">MGLPKLVCVFLFAACCCCRRAAGVPGEEKQPVPTPDLVEAEVGSTALLKCGPSRASGNFSQVDWFLIHKERQILIFRVHQGKGQREPGEYEHRLSLQDSVATLALSHVTPHDERMFLCKSKRPRLQDHYVELQVFKAPEEPTIQANVVGIHVDRQELREVATCVGRNGYPIPQVLWYKNSLPLQEEENRVHIQSSQIVESSGLYTLKSVLSARLVKEDKDAQFYCELSYRLPSGNHMKESKEVTVPVFYPAEKVWVEVEPVGLLKEGDHVTIRCLTDGNPQPHFTINKKDPSTGEMEEESTDENGLLSLEPAEKHHSGLYQCQSLDLETTITLSSDPLELLVNYVSDVQVNPTAPEVQEGESLTLTCEAESNQDLEFEWLRDKTGQLLGKGPVLQLNNVRREAGGRYLCMASVPRVPGLNRTQLVSVGIFGSPWMALKERKVWVQENAVLNLSCEASGHPQPTISWNVNGSATEWNPDPQTVVSTLNVLVTPELLETGAECTASNSLGSNTTTIVLKLVTLTTLIPDSSQTTGLSTLTVSPHTRANSTSTEKKLPQPESKGVVIVAVIVCTLVLAVLGAALYFFYKKGKLPCGRSGKQEITLPPTRKSEFVVEVKSDKLPEEMALLQGSNGDKRAPGDQGEKYIDLRH</sequence>
<feature type="signal peptide" evidence="1">
    <location>
        <begin position="1"/>
        <end position="23"/>
    </location>
</feature>
<feature type="chain" id="PRO_0000045460" description="Cell surface glycoprotein MUC18">
    <location>
        <begin position="24"/>
        <end position="648"/>
    </location>
</feature>
<feature type="topological domain" description="Extracellular" evidence="3">
    <location>
        <begin position="24"/>
        <end position="563"/>
    </location>
</feature>
<feature type="transmembrane region" description="Helical" evidence="3">
    <location>
        <begin position="564"/>
        <end position="584"/>
    </location>
</feature>
<feature type="topological domain" description="Cytoplasmic" evidence="3">
    <location>
        <begin position="585"/>
        <end position="648"/>
    </location>
</feature>
<feature type="domain" description="Ig-like V-type 1">
    <location>
        <begin position="24"/>
        <end position="131"/>
    </location>
</feature>
<feature type="domain" description="Ig-like V-type 2">
    <location>
        <begin position="141"/>
        <end position="244"/>
    </location>
</feature>
<feature type="domain" description="Ig-like C2-type 1">
    <location>
        <begin position="246"/>
        <end position="332"/>
    </location>
</feature>
<feature type="domain" description="Ig-like C2-type 2">
    <location>
        <begin position="337"/>
        <end position="426"/>
    </location>
</feature>
<feature type="domain" description="Ig-like C2-type 3">
    <location>
        <begin position="432"/>
        <end position="512"/>
    </location>
</feature>
<feature type="region of interest" description="Disordered" evidence="5">
    <location>
        <begin position="281"/>
        <end position="304"/>
    </location>
</feature>
<feature type="region of interest" description="Disordered" evidence="5">
    <location>
        <begin position="532"/>
        <end position="554"/>
    </location>
</feature>
<feature type="region of interest" description="Disordered" evidence="5">
    <location>
        <begin position="625"/>
        <end position="648"/>
    </location>
</feature>
<feature type="compositionally biased region" description="Polar residues" evidence="5">
    <location>
        <begin position="532"/>
        <end position="549"/>
    </location>
</feature>
<feature type="compositionally biased region" description="Basic and acidic residues" evidence="5">
    <location>
        <begin position="631"/>
        <end position="648"/>
    </location>
</feature>
<feature type="modified residue" description="Phosphoserine" evidence="11">
    <location>
        <position position="608"/>
    </location>
</feature>
<feature type="modified residue" description="Phosphoserine" evidence="2">
    <location>
        <position position="616"/>
    </location>
</feature>
<feature type="glycosylation site" description="N-linked (GlcNAc...) asparagine" evidence="7">
    <location>
        <position position="58"/>
    </location>
</feature>
<feature type="glycosylation site" description="N-linked (GlcNAc...) asparagine" evidence="7">
    <location>
        <position position="510"/>
    </location>
</feature>
<feature type="disulfide bond" evidence="4">
    <location>
        <begin position="50"/>
        <end position="118"/>
    </location>
</feature>
<feature type="disulfide bond" evidence="4">
    <location>
        <begin position="163"/>
        <end position="225"/>
    </location>
</feature>
<feature type="disulfide bond" evidence="4">
    <location>
        <begin position="274"/>
        <end position="322"/>
    </location>
</feature>
<feature type="disulfide bond" evidence="4">
    <location>
        <begin position="367"/>
        <end position="409"/>
    </location>
</feature>
<feature type="disulfide bond" evidence="4">
    <location>
        <begin position="454"/>
        <end position="501"/>
    </location>
</feature>
<feature type="splice variant" id="VSP_016940" description="In isoform 2." evidence="8 9">
    <original>ITLPPTRKSEFVVEVKSDKLPEEMALLQGSNGDKRAPGDQGEKYIDLRH</original>
    <variation>MERNTSI</variation>
    <location>
        <begin position="600"/>
        <end position="648"/>
    </location>
</feature>
<feature type="sequence conflict" description="In Ref. 1; BAB16050/BAB16051." evidence="10" ref="1">
    <original>F</original>
    <variation>L</variation>
    <location>
        <position position="584"/>
    </location>
</feature>
<accession>Q8R2Y2</accession>
<accession>Q9EPF1</accession>
<accession>Q9ESS7</accession>
<accession>Q9JHQ2</accession>
<accession>Q9JHQ3</accession>
<evidence type="ECO:0000250" key="1"/>
<evidence type="ECO:0000250" key="2">
    <source>
        <dbReference type="UniProtKB" id="P43121"/>
    </source>
</evidence>
<evidence type="ECO:0000255" key="3"/>
<evidence type="ECO:0000255" key="4">
    <source>
        <dbReference type="PROSITE-ProRule" id="PRU00114"/>
    </source>
</evidence>
<evidence type="ECO:0000256" key="5">
    <source>
        <dbReference type="SAM" id="MobiDB-lite"/>
    </source>
</evidence>
<evidence type="ECO:0000269" key="6">
    <source>
    </source>
</evidence>
<evidence type="ECO:0000269" key="7">
    <source>
    </source>
</evidence>
<evidence type="ECO:0000303" key="8">
    <source>
    </source>
</evidence>
<evidence type="ECO:0000303" key="9">
    <source ref="1"/>
</evidence>
<evidence type="ECO:0000305" key="10"/>
<evidence type="ECO:0007744" key="11">
    <source>
    </source>
</evidence>
<name>MUC18_MOUSE</name>
<organism>
    <name type="scientific">Mus musculus</name>
    <name type="common">Mouse</name>
    <dbReference type="NCBI Taxonomy" id="10090"/>
    <lineage>
        <taxon>Eukaryota</taxon>
        <taxon>Metazoa</taxon>
        <taxon>Chordata</taxon>
        <taxon>Craniata</taxon>
        <taxon>Vertebrata</taxon>
        <taxon>Euteleostomi</taxon>
        <taxon>Mammalia</taxon>
        <taxon>Eutheria</taxon>
        <taxon>Euarchontoglires</taxon>
        <taxon>Glires</taxon>
        <taxon>Rodentia</taxon>
        <taxon>Myomorpha</taxon>
        <taxon>Muroidea</taxon>
        <taxon>Muridae</taxon>
        <taxon>Murinae</taxon>
        <taxon>Mus</taxon>
        <taxon>Mus</taxon>
    </lineage>
</organism>
<proteinExistence type="evidence at protein level"/>
<protein>
    <recommendedName>
        <fullName>Cell surface glycoprotein MUC18</fullName>
    </recommendedName>
    <alternativeName>
        <fullName>Gicerin</fullName>
    </alternativeName>
    <alternativeName>
        <fullName>Melanoma cell adhesion molecule</fullName>
    </alternativeName>
    <alternativeName>
        <fullName>Melanoma-associated antigen MUC18</fullName>
    </alternativeName>
    <cdAntigenName>CD146</cdAntigenName>
</protein>
<comment type="function">
    <text evidence="1">Plays a role in cell adhesion, and in cohesion of the endothelial monolayer at intercellular junctions in vascular tissue. Its expression may allow melanoma cells to interact with cellular elements of the vascular system, thereby enhancing hematogeneous tumor spread. Could be an adhesion molecule active in neural crest cells during embryonic development. Acts as a surface receptor that triggers tyrosine phosphorylation of FYN and PTK2/FAK1, and a transient increase in the intracellular calcium concentration (By similarity).</text>
</comment>
<comment type="subcellular location">
    <subcellularLocation>
        <location evidence="1">Membrane</location>
        <topology evidence="1">Single-pass type I membrane protein</topology>
    </subcellularLocation>
</comment>
<comment type="alternative products">
    <event type="alternative splicing"/>
    <isoform>
        <id>Q8R2Y2-1</id>
        <name>1</name>
        <name>L-gicerin</name>
        <sequence type="displayed"/>
    </isoform>
    <isoform>
        <id>Q8R2Y2-2</id>
        <name>2</name>
        <name>S-gicerin</name>
        <sequence type="described" ref="VSP_016940"/>
    </isoform>
</comment>
<comment type="tissue specificity">
    <text evidence="6">Detected in melanoma cell lines.</text>
</comment>
<keyword id="KW-0025">Alternative splicing</keyword>
<keyword id="KW-0130">Cell adhesion</keyword>
<keyword id="KW-1015">Disulfide bond</keyword>
<keyword id="KW-0325">Glycoprotein</keyword>
<keyword id="KW-0393">Immunoglobulin domain</keyword>
<keyword id="KW-0472">Membrane</keyword>
<keyword id="KW-0597">Phosphoprotein</keyword>
<keyword id="KW-1185">Reference proteome</keyword>
<keyword id="KW-0677">Repeat</keyword>
<keyword id="KW-0732">Signal</keyword>
<keyword id="KW-0812">Transmembrane</keyword>
<keyword id="KW-1133">Transmembrane helix</keyword>
<reference key="1">
    <citation type="submission" date="1999-12" db="EMBL/GenBank/DDBJ databases">
        <authorList>
            <person name="Taira E."/>
            <person name="Okumura S."/>
            <person name="Miki N."/>
        </authorList>
    </citation>
    <scope>NUCLEOTIDE SEQUENCE [MRNA] (ISOFORMS 1 AND 2)</scope>
    <source>
        <strain>BALB/cJ</strain>
    </source>
</reference>
<reference key="2">
    <citation type="journal article" date="2004" name="Genome Res.">
        <title>The status, quality, and expansion of the NIH full-length cDNA project: the Mammalian Gene Collection (MGC).</title>
        <authorList>
            <consortium name="The MGC Project Team"/>
        </authorList>
    </citation>
    <scope>NUCLEOTIDE SEQUENCE [LARGE SCALE MRNA] (ISOFORM 1)</scope>
    <source>
        <strain>FVB/N-3</strain>
        <tissue>Mammary tumor</tissue>
    </source>
</reference>
<reference key="3">
    <citation type="journal article" date="2001" name="J. Cell Sci.">
        <title>HEMCAM/CD146 down regulates cell surface expression of beta-1 integrins.</title>
        <authorList>
            <person name="Alais S."/>
            <person name="Allioli N."/>
            <person name="Pujades C."/>
            <person name="Duband J.-L."/>
            <person name="Vainio O."/>
            <person name="Imhof B.A."/>
            <person name="Dunon D."/>
        </authorList>
    </citation>
    <scope>NUCLEOTIDE SEQUENCE [MRNA] OF 561-648 (ISOFORMS 1 AND 2)</scope>
</reference>
<reference key="4">
    <citation type="journal article" date="2001" name="Gene">
        <title>Isolation and characterization of mouse MUC18 cDNA gene, and correlation of MUC18 expression in mouse melanoma cell lines with metastatic ability.</title>
        <authorList>
            <person name="Yang H."/>
            <person name="Wang S.-W."/>
            <person name="Liu Z."/>
            <person name="Wu M.-W.H."/>
            <person name="McAlpine B."/>
            <person name="Ansel J."/>
            <person name="Armstrong C."/>
            <person name="Wu G.-J."/>
        </authorList>
    </citation>
    <scope>TISSUE SPECIFICITY</scope>
    <scope>ROLE IN MELANOMA</scope>
</reference>
<reference key="5">
    <citation type="journal article" date="2009" name="Nat. Biotechnol.">
        <title>Mass-spectrometric identification and relative quantification of N-linked cell surface glycoproteins.</title>
        <authorList>
            <person name="Wollscheid B."/>
            <person name="Bausch-Fluck D."/>
            <person name="Henderson C."/>
            <person name="O'Brien R."/>
            <person name="Bibel M."/>
            <person name="Schiess R."/>
            <person name="Aebersold R."/>
            <person name="Watts J.D."/>
        </authorList>
    </citation>
    <scope>GLYCOSYLATION [LARGE SCALE ANALYSIS] AT ASN-58 AND ASN-510</scope>
</reference>
<reference key="6">
    <citation type="journal article" date="2010" name="Cell">
        <title>A tissue-specific atlas of mouse protein phosphorylation and expression.</title>
        <authorList>
            <person name="Huttlin E.L."/>
            <person name="Jedrychowski M.P."/>
            <person name="Elias J.E."/>
            <person name="Goswami T."/>
            <person name="Rad R."/>
            <person name="Beausoleil S.A."/>
            <person name="Villen J."/>
            <person name="Haas W."/>
            <person name="Sowa M.E."/>
            <person name="Gygi S.P."/>
        </authorList>
    </citation>
    <scope>PHOSPHORYLATION [LARGE SCALE ANALYSIS] AT SER-608</scope>
    <scope>IDENTIFICATION BY MASS SPECTROMETRY [LARGE SCALE ANALYSIS]</scope>
    <source>
        <tissue>Brain</tissue>
        <tissue>Brown adipose tissue</tissue>
        <tissue>Heart</tissue>
        <tissue>Kidney</tissue>
        <tissue>Liver</tissue>
        <tissue>Lung</tissue>
        <tissue>Pancreas</tissue>
        <tissue>Spleen</tissue>
        <tissue>Testis</tissue>
    </source>
</reference>